<reference key="1">
    <citation type="journal article" date="2005" name="Nature">
        <title>The genome of the social amoeba Dictyostelium discoideum.</title>
        <authorList>
            <person name="Eichinger L."/>
            <person name="Pachebat J.A."/>
            <person name="Gloeckner G."/>
            <person name="Rajandream M.A."/>
            <person name="Sucgang R."/>
            <person name="Berriman M."/>
            <person name="Song J."/>
            <person name="Olsen R."/>
            <person name="Szafranski K."/>
            <person name="Xu Q."/>
            <person name="Tunggal B."/>
            <person name="Kummerfeld S."/>
            <person name="Madera M."/>
            <person name="Konfortov B.A."/>
            <person name="Rivero F."/>
            <person name="Bankier A.T."/>
            <person name="Lehmann R."/>
            <person name="Hamlin N."/>
            <person name="Davies R."/>
            <person name="Gaudet P."/>
            <person name="Fey P."/>
            <person name="Pilcher K."/>
            <person name="Chen G."/>
            <person name="Saunders D."/>
            <person name="Sodergren E.J."/>
            <person name="Davis P."/>
            <person name="Kerhornou A."/>
            <person name="Nie X."/>
            <person name="Hall N."/>
            <person name="Anjard C."/>
            <person name="Hemphill L."/>
            <person name="Bason N."/>
            <person name="Farbrother P."/>
            <person name="Desany B."/>
            <person name="Just E."/>
            <person name="Morio T."/>
            <person name="Rost R."/>
            <person name="Churcher C.M."/>
            <person name="Cooper J."/>
            <person name="Haydock S."/>
            <person name="van Driessche N."/>
            <person name="Cronin A."/>
            <person name="Goodhead I."/>
            <person name="Muzny D.M."/>
            <person name="Mourier T."/>
            <person name="Pain A."/>
            <person name="Lu M."/>
            <person name="Harper D."/>
            <person name="Lindsay R."/>
            <person name="Hauser H."/>
            <person name="James K.D."/>
            <person name="Quiles M."/>
            <person name="Madan Babu M."/>
            <person name="Saito T."/>
            <person name="Buchrieser C."/>
            <person name="Wardroper A."/>
            <person name="Felder M."/>
            <person name="Thangavelu M."/>
            <person name="Johnson D."/>
            <person name="Knights A."/>
            <person name="Loulseged H."/>
            <person name="Mungall K.L."/>
            <person name="Oliver K."/>
            <person name="Price C."/>
            <person name="Quail M.A."/>
            <person name="Urushihara H."/>
            <person name="Hernandez J."/>
            <person name="Rabbinowitsch E."/>
            <person name="Steffen D."/>
            <person name="Sanders M."/>
            <person name="Ma J."/>
            <person name="Kohara Y."/>
            <person name="Sharp S."/>
            <person name="Simmonds M.N."/>
            <person name="Spiegler S."/>
            <person name="Tivey A."/>
            <person name="Sugano S."/>
            <person name="White B."/>
            <person name="Walker D."/>
            <person name="Woodward J.R."/>
            <person name="Winckler T."/>
            <person name="Tanaka Y."/>
            <person name="Shaulsky G."/>
            <person name="Schleicher M."/>
            <person name="Weinstock G.M."/>
            <person name="Rosenthal A."/>
            <person name="Cox E.C."/>
            <person name="Chisholm R.L."/>
            <person name="Gibbs R.A."/>
            <person name="Loomis W.F."/>
            <person name="Platzer M."/>
            <person name="Kay R.R."/>
            <person name="Williams J.G."/>
            <person name="Dear P.H."/>
            <person name="Noegel A.A."/>
            <person name="Barrell B.G."/>
            <person name="Kuspa A."/>
        </authorList>
    </citation>
    <scope>NUCLEOTIDE SEQUENCE [LARGE SCALE GENOMIC DNA]</scope>
    <source>
        <strain>AX4</strain>
    </source>
</reference>
<evidence type="ECO:0000250" key="1"/>
<evidence type="ECO:0000305" key="2"/>
<keyword id="KW-0067">ATP-binding</keyword>
<keyword id="KW-0143">Chaperone</keyword>
<keyword id="KW-0547">Nucleotide-binding</keyword>
<keyword id="KW-1185">Reference proteome</keyword>
<accession>Q54MR6</accession>
<feature type="chain" id="PRO_0000327974" description="Heat shock 70-related protein 5">
    <location>
        <begin position="1"/>
        <end position="517"/>
    </location>
</feature>
<gene>
    <name type="ORF">DDB_G0285709</name>
</gene>
<proteinExistence type="inferred from homology"/>
<protein>
    <recommendedName>
        <fullName>Heat shock 70-related protein 5</fullName>
    </recommendedName>
</protein>
<name>HS7C5_DICDI</name>
<organism>
    <name type="scientific">Dictyostelium discoideum</name>
    <name type="common">Social amoeba</name>
    <dbReference type="NCBI Taxonomy" id="44689"/>
    <lineage>
        <taxon>Eukaryota</taxon>
        <taxon>Amoebozoa</taxon>
        <taxon>Evosea</taxon>
        <taxon>Eumycetozoa</taxon>
        <taxon>Dictyostelia</taxon>
        <taxon>Dictyosteliales</taxon>
        <taxon>Dictyosteliaceae</taxon>
        <taxon>Dictyostelium</taxon>
    </lineage>
</organism>
<dbReference type="EMBL" id="AAFI02000079">
    <property type="protein sequence ID" value="EAL64692.1"/>
    <property type="molecule type" value="Genomic_DNA"/>
</dbReference>
<dbReference type="RefSeq" id="XP_638227.1">
    <property type="nucleotide sequence ID" value="XM_633135.1"/>
</dbReference>
<dbReference type="SMR" id="Q54MR6"/>
<dbReference type="FunCoup" id="Q54MR6">
    <property type="interactions" value="173"/>
</dbReference>
<dbReference type="STRING" id="44689.Q54MR6"/>
<dbReference type="PaxDb" id="44689-DDB0232925"/>
<dbReference type="EnsemblProtists" id="EAL64692">
    <property type="protein sequence ID" value="EAL64692"/>
    <property type="gene ID" value="DDB_G0285709"/>
</dbReference>
<dbReference type="GeneID" id="8625275"/>
<dbReference type="KEGG" id="ddi:DDB_G0285709"/>
<dbReference type="dictyBase" id="DDB_G0285709"/>
<dbReference type="VEuPathDB" id="AmoebaDB:DDB_G0285709"/>
<dbReference type="eggNOG" id="KOG0101">
    <property type="taxonomic scope" value="Eukaryota"/>
</dbReference>
<dbReference type="HOGENOM" id="CLU_005965_0_1_1"/>
<dbReference type="InParanoid" id="Q54MR6"/>
<dbReference type="OMA" id="EICPNQQ"/>
<dbReference type="PhylomeDB" id="Q54MR6"/>
<dbReference type="Reactome" id="R-DDI-3371453">
    <property type="pathway name" value="Regulation of HSF1-mediated heat shock response"/>
</dbReference>
<dbReference type="Reactome" id="R-DDI-3371497">
    <property type="pathway name" value="HSP90 chaperone cycle for steroid hormone receptors (SHR) in the presence of ligand"/>
</dbReference>
<dbReference type="Reactome" id="R-DDI-3371571">
    <property type="pathway name" value="HSF1-dependent transactivation"/>
</dbReference>
<dbReference type="Reactome" id="R-DDI-450408">
    <property type="pathway name" value="AUF1 (hnRNP D0) binds and destabilizes mRNA"/>
</dbReference>
<dbReference type="Reactome" id="R-DDI-6798695">
    <property type="pathway name" value="Neutrophil degranulation"/>
</dbReference>
<dbReference type="Reactome" id="R-DDI-9841251">
    <property type="pathway name" value="Mitochondrial unfolded protein response (UPRmt)"/>
</dbReference>
<dbReference type="PRO" id="PR:Q54MR6"/>
<dbReference type="Proteomes" id="UP000002195">
    <property type="component" value="Chromosome 4"/>
</dbReference>
<dbReference type="GO" id="GO:0005737">
    <property type="term" value="C:cytoplasm"/>
    <property type="evidence" value="ECO:0000318"/>
    <property type="project" value="GO_Central"/>
</dbReference>
<dbReference type="GO" id="GO:0045335">
    <property type="term" value="C:phagocytic vesicle"/>
    <property type="evidence" value="ECO:0007005"/>
    <property type="project" value="dictyBase"/>
</dbReference>
<dbReference type="GO" id="GO:0005524">
    <property type="term" value="F:ATP binding"/>
    <property type="evidence" value="ECO:0007669"/>
    <property type="project" value="UniProtKB-KW"/>
</dbReference>
<dbReference type="GO" id="GO:0016887">
    <property type="term" value="F:ATP hydrolysis activity"/>
    <property type="evidence" value="ECO:0000318"/>
    <property type="project" value="GO_Central"/>
</dbReference>
<dbReference type="GO" id="GO:0140662">
    <property type="term" value="F:ATP-dependent protein folding chaperone"/>
    <property type="evidence" value="ECO:0007669"/>
    <property type="project" value="InterPro"/>
</dbReference>
<dbReference type="GO" id="GO:0031072">
    <property type="term" value="F:heat shock protein binding"/>
    <property type="evidence" value="ECO:0000318"/>
    <property type="project" value="GO_Central"/>
</dbReference>
<dbReference type="GO" id="GO:0044183">
    <property type="term" value="F:protein folding chaperone"/>
    <property type="evidence" value="ECO:0000318"/>
    <property type="project" value="GO_Central"/>
</dbReference>
<dbReference type="GO" id="GO:0051085">
    <property type="term" value="P:chaperone cofactor-dependent protein refolding"/>
    <property type="evidence" value="ECO:0000318"/>
    <property type="project" value="GO_Central"/>
</dbReference>
<dbReference type="GO" id="GO:0042026">
    <property type="term" value="P:protein refolding"/>
    <property type="evidence" value="ECO:0000318"/>
    <property type="project" value="GO_Central"/>
</dbReference>
<dbReference type="CDD" id="cd24028">
    <property type="entry name" value="ASKHA_NBD_HSP70_HSPA1-like"/>
    <property type="match status" value="1"/>
</dbReference>
<dbReference type="FunFam" id="3.30.30.30:FF:000007">
    <property type="entry name" value="Heat shock 70 kDa protein 13"/>
    <property type="match status" value="1"/>
</dbReference>
<dbReference type="FunFam" id="3.90.640.10:FF:000010">
    <property type="entry name" value="heat shock 70 kDa protein 14"/>
    <property type="match status" value="1"/>
</dbReference>
<dbReference type="Gene3D" id="3.30.30.30">
    <property type="match status" value="1"/>
</dbReference>
<dbReference type="Gene3D" id="3.30.420.40">
    <property type="match status" value="2"/>
</dbReference>
<dbReference type="Gene3D" id="3.90.640.10">
    <property type="entry name" value="Actin, Chain A, domain 4"/>
    <property type="match status" value="1"/>
</dbReference>
<dbReference type="Gene3D" id="2.60.34.10">
    <property type="entry name" value="Substrate Binding Domain Of DNAk, Chain A, domain 1"/>
    <property type="match status" value="1"/>
</dbReference>
<dbReference type="InterPro" id="IPR043129">
    <property type="entry name" value="ATPase_NBD"/>
</dbReference>
<dbReference type="InterPro" id="IPR029047">
    <property type="entry name" value="HSP70_peptide-bd_sf"/>
</dbReference>
<dbReference type="InterPro" id="IPR013126">
    <property type="entry name" value="Hsp_70_fam"/>
</dbReference>
<dbReference type="PANTHER" id="PTHR19375">
    <property type="entry name" value="HEAT SHOCK PROTEIN 70KDA"/>
    <property type="match status" value="1"/>
</dbReference>
<dbReference type="Pfam" id="PF00012">
    <property type="entry name" value="HSP70"/>
    <property type="match status" value="1"/>
</dbReference>
<dbReference type="PRINTS" id="PR00301">
    <property type="entry name" value="HEATSHOCK70"/>
</dbReference>
<dbReference type="SUPFAM" id="SSF53067">
    <property type="entry name" value="Actin-like ATPase domain"/>
    <property type="match status" value="2"/>
</dbReference>
<dbReference type="SUPFAM" id="SSF100920">
    <property type="entry name" value="Heat shock protein 70kD (HSP70), peptide-binding domain"/>
    <property type="match status" value="1"/>
</dbReference>
<sequence length="517" mass="57367">MANNNIMGIDFGTHFACVGIFKNERIEICPNQQGNRTTPSVVSFVGDDKLVGDEAKAQMDRNPLNTIYDVKRLLGRKTTDELFDHEVKKLSFKVTTYEDNNEKIEFQVNYKSNVVTLTPIEIATSILEQIKHTAETFIGGESIKKAVISVPTDFTEKQRNDLKEAATAAGITVVRMIHEHSAVALAYGYDQVKECSETTNESKESNVMVFDLGGSGVSASMIRVRSKLFEMIGNVSDHTVSGEHFDHVLVQHFTQEFNRKYRCDLTDNARSKAKLKSACEKAKRNLSNMTQAALEIDSLYDGRDFFTNITRARFEDMASGLIKGSINAVSQLLEKCNMTKEQVDKVLLVGGASRIPSVQNQLLNFFDNRQDILERSMNQEEVVAHGTTIQATILAADKSNQSLTCNSSNISMGAPFSAKFTPVTIGIQDSNGNLIPIIPSSSLIPCKRTFTLNTSSENQDNLNMAVYQGSAPLAKDNQLVSRFIFKSSPNPIDVTFEIDNNNTLLIKSEQANYSIKF</sequence>
<comment type="function">
    <text evidence="1">May function in protein folding and assembly, and disassembly of protein complexes.</text>
</comment>
<comment type="similarity">
    <text evidence="2">Belongs to the heat shock protein 70 family.</text>
</comment>